<evidence type="ECO:0000255" key="1">
    <source>
        <dbReference type="HAMAP-Rule" id="MF_01554"/>
    </source>
</evidence>
<proteinExistence type="inferred from homology"/>
<dbReference type="EC" id="5.4.2.10" evidence="1"/>
<dbReference type="EMBL" id="L42023">
    <property type="protein sequence ID" value="AAC22984.1"/>
    <property type="molecule type" value="Genomic_DNA"/>
</dbReference>
<dbReference type="EMBL" id="L42023">
    <property type="protein sequence ID" value="AAC23110.1"/>
    <property type="molecule type" value="Genomic_DNA"/>
</dbReference>
<dbReference type="PIR" id="C64172">
    <property type="entry name" value="C64172"/>
</dbReference>
<dbReference type="RefSeq" id="NP_439488.1">
    <property type="nucleotide sequence ID" value="NC_000907.1"/>
</dbReference>
<dbReference type="RefSeq" id="NP_439614.1">
    <property type="nucleotide sequence ID" value="NC_000907.1"/>
</dbReference>
<dbReference type="SMR" id="P45164"/>
<dbReference type="STRING" id="71421.HI_1337"/>
<dbReference type="DNASU" id="950893"/>
<dbReference type="EnsemblBacteria" id="AAC22984">
    <property type="protein sequence ID" value="AAC22984"/>
    <property type="gene ID" value="HI_1337"/>
</dbReference>
<dbReference type="EnsemblBacteria" id="AAC23110">
    <property type="protein sequence ID" value="AAC23110"/>
    <property type="gene ID" value="HI_1463"/>
</dbReference>
<dbReference type="KEGG" id="hin:HI_1337"/>
<dbReference type="KEGG" id="hin:HI_1463"/>
<dbReference type="PATRIC" id="fig|71421.8.peg.1389"/>
<dbReference type="eggNOG" id="COG1109">
    <property type="taxonomic scope" value="Bacteria"/>
</dbReference>
<dbReference type="HOGENOM" id="CLU_016950_7_0_6"/>
<dbReference type="OrthoDB" id="9803322at2"/>
<dbReference type="PhylomeDB" id="P45164"/>
<dbReference type="Proteomes" id="UP000000579">
    <property type="component" value="Chromosome"/>
</dbReference>
<dbReference type="GO" id="GO:0005829">
    <property type="term" value="C:cytosol"/>
    <property type="evidence" value="ECO:0000318"/>
    <property type="project" value="GO_Central"/>
</dbReference>
<dbReference type="GO" id="GO:0000287">
    <property type="term" value="F:magnesium ion binding"/>
    <property type="evidence" value="ECO:0007669"/>
    <property type="project" value="UniProtKB-UniRule"/>
</dbReference>
<dbReference type="GO" id="GO:0008966">
    <property type="term" value="F:phosphoglucosamine mutase activity"/>
    <property type="evidence" value="ECO:0000318"/>
    <property type="project" value="GO_Central"/>
</dbReference>
<dbReference type="GO" id="GO:0004615">
    <property type="term" value="F:phosphomannomutase activity"/>
    <property type="evidence" value="ECO:0000318"/>
    <property type="project" value="GO_Central"/>
</dbReference>
<dbReference type="GO" id="GO:0005975">
    <property type="term" value="P:carbohydrate metabolic process"/>
    <property type="evidence" value="ECO:0007669"/>
    <property type="project" value="InterPro"/>
</dbReference>
<dbReference type="GO" id="GO:0009252">
    <property type="term" value="P:peptidoglycan biosynthetic process"/>
    <property type="evidence" value="ECO:0000318"/>
    <property type="project" value="GO_Central"/>
</dbReference>
<dbReference type="GO" id="GO:0006048">
    <property type="term" value="P:UDP-N-acetylglucosamine biosynthetic process"/>
    <property type="evidence" value="ECO:0000318"/>
    <property type="project" value="GO_Central"/>
</dbReference>
<dbReference type="CDD" id="cd05802">
    <property type="entry name" value="GlmM"/>
    <property type="match status" value="1"/>
</dbReference>
<dbReference type="FunFam" id="3.30.310.50:FF:000001">
    <property type="entry name" value="Phosphoglucosamine mutase"/>
    <property type="match status" value="1"/>
</dbReference>
<dbReference type="FunFam" id="3.40.120.10:FF:000001">
    <property type="entry name" value="Phosphoglucosamine mutase"/>
    <property type="match status" value="1"/>
</dbReference>
<dbReference type="FunFam" id="3.40.120.10:FF:000003">
    <property type="entry name" value="Phosphoglucosamine mutase"/>
    <property type="match status" value="1"/>
</dbReference>
<dbReference type="Gene3D" id="3.40.120.10">
    <property type="entry name" value="Alpha-D-Glucose-1,6-Bisphosphate, subunit A, domain 3"/>
    <property type="match status" value="3"/>
</dbReference>
<dbReference type="Gene3D" id="3.30.310.50">
    <property type="entry name" value="Alpha-D-phosphohexomutase, C-terminal domain"/>
    <property type="match status" value="1"/>
</dbReference>
<dbReference type="HAMAP" id="MF_01554_B">
    <property type="entry name" value="GlmM_B"/>
    <property type="match status" value="1"/>
</dbReference>
<dbReference type="InterPro" id="IPR005844">
    <property type="entry name" value="A-D-PHexomutase_a/b/a-I"/>
</dbReference>
<dbReference type="InterPro" id="IPR016055">
    <property type="entry name" value="A-D-PHexomutase_a/b/a-I/II/III"/>
</dbReference>
<dbReference type="InterPro" id="IPR005845">
    <property type="entry name" value="A-D-PHexomutase_a/b/a-II"/>
</dbReference>
<dbReference type="InterPro" id="IPR005846">
    <property type="entry name" value="A-D-PHexomutase_a/b/a-III"/>
</dbReference>
<dbReference type="InterPro" id="IPR005843">
    <property type="entry name" value="A-D-PHexomutase_C"/>
</dbReference>
<dbReference type="InterPro" id="IPR036900">
    <property type="entry name" value="A-D-PHexomutase_C_sf"/>
</dbReference>
<dbReference type="InterPro" id="IPR016066">
    <property type="entry name" value="A-D-PHexomutase_CS"/>
</dbReference>
<dbReference type="InterPro" id="IPR005841">
    <property type="entry name" value="Alpha-D-phosphohexomutase_SF"/>
</dbReference>
<dbReference type="InterPro" id="IPR006352">
    <property type="entry name" value="GlmM_bact"/>
</dbReference>
<dbReference type="InterPro" id="IPR050060">
    <property type="entry name" value="Phosphoglucosamine_mutase"/>
</dbReference>
<dbReference type="NCBIfam" id="TIGR01455">
    <property type="entry name" value="glmM"/>
    <property type="match status" value="1"/>
</dbReference>
<dbReference type="NCBIfam" id="NF008139">
    <property type="entry name" value="PRK10887.1"/>
    <property type="match status" value="1"/>
</dbReference>
<dbReference type="PANTHER" id="PTHR42946:SF1">
    <property type="entry name" value="PHOSPHOGLUCOMUTASE (ALPHA-D-GLUCOSE-1,6-BISPHOSPHATE-DEPENDENT)"/>
    <property type="match status" value="1"/>
</dbReference>
<dbReference type="PANTHER" id="PTHR42946">
    <property type="entry name" value="PHOSPHOHEXOSE MUTASE"/>
    <property type="match status" value="1"/>
</dbReference>
<dbReference type="Pfam" id="PF02878">
    <property type="entry name" value="PGM_PMM_I"/>
    <property type="match status" value="1"/>
</dbReference>
<dbReference type="Pfam" id="PF02879">
    <property type="entry name" value="PGM_PMM_II"/>
    <property type="match status" value="1"/>
</dbReference>
<dbReference type="Pfam" id="PF02880">
    <property type="entry name" value="PGM_PMM_III"/>
    <property type="match status" value="1"/>
</dbReference>
<dbReference type="Pfam" id="PF00408">
    <property type="entry name" value="PGM_PMM_IV"/>
    <property type="match status" value="1"/>
</dbReference>
<dbReference type="PRINTS" id="PR00509">
    <property type="entry name" value="PGMPMM"/>
</dbReference>
<dbReference type="SUPFAM" id="SSF55957">
    <property type="entry name" value="Phosphoglucomutase, C-terminal domain"/>
    <property type="match status" value="1"/>
</dbReference>
<dbReference type="SUPFAM" id="SSF53738">
    <property type="entry name" value="Phosphoglucomutase, first 3 domains"/>
    <property type="match status" value="3"/>
</dbReference>
<dbReference type="PROSITE" id="PS00710">
    <property type="entry name" value="PGM_PMM"/>
    <property type="match status" value="1"/>
</dbReference>
<reference key="1">
    <citation type="journal article" date="1995" name="Science">
        <title>Whole-genome random sequencing and assembly of Haemophilus influenzae Rd.</title>
        <authorList>
            <person name="Fleischmann R.D."/>
            <person name="Adams M.D."/>
            <person name="White O."/>
            <person name="Clayton R.A."/>
            <person name="Kirkness E.F."/>
            <person name="Kerlavage A.R."/>
            <person name="Bult C.J."/>
            <person name="Tomb J.-F."/>
            <person name="Dougherty B.A."/>
            <person name="Merrick J.M."/>
            <person name="McKenney K."/>
            <person name="Sutton G.G."/>
            <person name="FitzHugh W."/>
            <person name="Fields C.A."/>
            <person name="Gocayne J.D."/>
            <person name="Scott J.D."/>
            <person name="Shirley R."/>
            <person name="Liu L.-I."/>
            <person name="Glodek A."/>
            <person name="Kelley J.M."/>
            <person name="Weidman J.F."/>
            <person name="Phillips C.A."/>
            <person name="Spriggs T."/>
            <person name="Hedblom E."/>
            <person name="Cotton M.D."/>
            <person name="Utterback T.R."/>
            <person name="Hanna M.C."/>
            <person name="Nguyen D.T."/>
            <person name="Saudek D.M."/>
            <person name="Brandon R.C."/>
            <person name="Fine L.D."/>
            <person name="Fritchman J.L."/>
            <person name="Fuhrmann J.L."/>
            <person name="Geoghagen N.S.M."/>
            <person name="Gnehm C.L."/>
            <person name="McDonald L.A."/>
            <person name="Small K.V."/>
            <person name="Fraser C.M."/>
            <person name="Smith H.O."/>
            <person name="Venter J.C."/>
        </authorList>
    </citation>
    <scope>NUCLEOTIDE SEQUENCE [LARGE SCALE GENOMIC DNA]</scope>
    <source>
        <strain>ATCC 51907 / DSM 11121 / KW20 / Rd</strain>
    </source>
</reference>
<accession>P45164</accession>
<protein>
    <recommendedName>
        <fullName evidence="1">Phosphoglucosamine mutase</fullName>
        <ecNumber evidence="1">5.4.2.10</ecNumber>
    </recommendedName>
</protein>
<feature type="chain" id="PRO_0000147896" description="Phosphoglucosamine mutase">
    <location>
        <begin position="1"/>
        <end position="445"/>
    </location>
</feature>
<feature type="active site" description="Phosphoserine intermediate" evidence="1">
    <location>
        <position position="102"/>
    </location>
</feature>
<feature type="binding site" description="via phosphate group" evidence="1">
    <location>
        <position position="102"/>
    </location>
    <ligand>
        <name>Mg(2+)</name>
        <dbReference type="ChEBI" id="CHEBI:18420"/>
    </ligand>
</feature>
<feature type="binding site" evidence="1">
    <location>
        <position position="241"/>
    </location>
    <ligand>
        <name>Mg(2+)</name>
        <dbReference type="ChEBI" id="CHEBI:18420"/>
    </ligand>
</feature>
<feature type="binding site" evidence="1">
    <location>
        <position position="243"/>
    </location>
    <ligand>
        <name>Mg(2+)</name>
        <dbReference type="ChEBI" id="CHEBI:18420"/>
    </ligand>
</feature>
<feature type="binding site" evidence="1">
    <location>
        <position position="245"/>
    </location>
    <ligand>
        <name>Mg(2+)</name>
        <dbReference type="ChEBI" id="CHEBI:18420"/>
    </ligand>
</feature>
<feature type="modified residue" description="Phosphoserine" evidence="1">
    <location>
        <position position="102"/>
    </location>
</feature>
<comment type="function">
    <text evidence="1">Catalyzes the conversion of glucosamine-6-phosphate to glucosamine-1-phosphate.</text>
</comment>
<comment type="catalytic activity">
    <reaction evidence="1">
        <text>alpha-D-glucosamine 1-phosphate = D-glucosamine 6-phosphate</text>
        <dbReference type="Rhea" id="RHEA:23424"/>
        <dbReference type="ChEBI" id="CHEBI:58516"/>
        <dbReference type="ChEBI" id="CHEBI:58725"/>
        <dbReference type="EC" id="5.4.2.10"/>
    </reaction>
</comment>
<comment type="cofactor">
    <cofactor evidence="1">
        <name>Mg(2+)</name>
        <dbReference type="ChEBI" id="CHEBI:18420"/>
    </cofactor>
    <text evidence="1">Binds 1 Mg(2+) ion per subunit.</text>
</comment>
<comment type="PTM">
    <text evidence="1">Activated by phosphorylation.</text>
</comment>
<comment type="similarity">
    <text evidence="1">Belongs to the phosphohexose mutase family.</text>
</comment>
<name>GLMM_HAEIN</name>
<sequence length="445" mass="47372">MANRKYFGTDGVRGKVGAYPITPDFALKLGWAAGKVLASQGSKMVLIGKDTRISGYMLESALEAGLAAAGLSAAFTGPMPTPAIAYLTRTFRAEAGIVISASHNPYYDNGIKFFSAKGTKLPDEIEEAIEAMLEQPMDCVESAELGKASRINDAAGRYIEFCKGTFPAHLGLEGYKIVVDCANGATYHIAPNVLRELGAEVIEIGTDPNGLNINEKCGATDVTALQAKVVETKADVGLAYDGDGDRIMMVDHLGNKVDGDQILFIIAREALRSGQLKGGVVGTLMSNMSLEIALKMLGVPFLRANVGDRYVLEKMVENDWTLGGENSGHIIIADKNTTGDGIVASLAVLAAMAQHKLSLNELASAVKLFPQVLINVRFAGGENPLESDAVKSVAAEVEKRLEGKGRILLRKSGTEPLIRVMVECQDAELAQQCAEEIAEAVKKIN</sequence>
<gene>
    <name evidence="1" type="primary">glmM1</name>
    <name type="synonym">glmM-A</name>
    <name type="synonym">mrsA-A</name>
    <name type="ordered locus">HI_1337</name>
</gene>
<gene>
    <name evidence="1" type="primary">glmM2</name>
    <name type="synonym">glmM-B</name>
    <name type="synonym">mrsA-B</name>
    <name type="ordered locus">HI_1463</name>
</gene>
<organism>
    <name type="scientific">Haemophilus influenzae (strain ATCC 51907 / DSM 11121 / KW20 / Rd)</name>
    <dbReference type="NCBI Taxonomy" id="71421"/>
    <lineage>
        <taxon>Bacteria</taxon>
        <taxon>Pseudomonadati</taxon>
        <taxon>Pseudomonadota</taxon>
        <taxon>Gammaproteobacteria</taxon>
        <taxon>Pasteurellales</taxon>
        <taxon>Pasteurellaceae</taxon>
        <taxon>Haemophilus</taxon>
    </lineage>
</organism>
<keyword id="KW-0413">Isomerase</keyword>
<keyword id="KW-0460">Magnesium</keyword>
<keyword id="KW-0479">Metal-binding</keyword>
<keyword id="KW-0597">Phosphoprotein</keyword>
<keyword id="KW-1185">Reference proteome</keyword>